<sequence length="183" mass="21359">MTKQPEDWLDDVPGDDIEDEDDEIIWVSKSEIKRDAEELKRLGAEIVDLGKNALDKIPLDADLRAAIELAQRIKMEGRRRQLQLIGKMLRQRDVEPIRQALDKLKNRHNQQVVLFHKLENLRDRLIDQGDDAIAEVLNLWPDADRQQLRTLIRNAKKEKEGNKPPKSARQIFQYLRELAENEG</sequence>
<dbReference type="EMBL" id="FM180568">
    <property type="protein sequence ID" value="CAS12108.1"/>
    <property type="molecule type" value="Genomic_DNA"/>
</dbReference>
<dbReference type="SMR" id="B7UQP4"/>
<dbReference type="KEGG" id="ecg:E2348C_4560"/>
<dbReference type="HOGENOM" id="CLU_106757_2_0_6"/>
<dbReference type="Proteomes" id="UP000008205">
    <property type="component" value="Chromosome"/>
</dbReference>
<dbReference type="GO" id="GO:0005829">
    <property type="term" value="C:cytosol"/>
    <property type="evidence" value="ECO:0007669"/>
    <property type="project" value="TreeGrafter"/>
</dbReference>
<dbReference type="GO" id="GO:0043022">
    <property type="term" value="F:ribosome binding"/>
    <property type="evidence" value="ECO:0007669"/>
    <property type="project" value="UniProtKB-UniRule"/>
</dbReference>
<dbReference type="GO" id="GO:0019843">
    <property type="term" value="F:rRNA binding"/>
    <property type="evidence" value="ECO:0007669"/>
    <property type="project" value="UniProtKB-UniRule"/>
</dbReference>
<dbReference type="GO" id="GO:1902626">
    <property type="term" value="P:assembly of large subunit precursor of preribosome"/>
    <property type="evidence" value="ECO:0007669"/>
    <property type="project" value="UniProtKB-UniRule"/>
</dbReference>
<dbReference type="CDD" id="cd16331">
    <property type="entry name" value="YjgA-like"/>
    <property type="match status" value="1"/>
</dbReference>
<dbReference type="FunFam" id="1.10.60.30:FF:000001">
    <property type="entry name" value="UPF0307 protein YjgA"/>
    <property type="match status" value="1"/>
</dbReference>
<dbReference type="FunFam" id="1.10.60.30:FF:000002">
    <property type="entry name" value="UPF0307 protein YjgA"/>
    <property type="match status" value="1"/>
</dbReference>
<dbReference type="Gene3D" id="1.10.60.30">
    <property type="entry name" value="PSPTO4464-like domains"/>
    <property type="match status" value="2"/>
</dbReference>
<dbReference type="HAMAP" id="MF_00765">
    <property type="entry name" value="DarP"/>
    <property type="match status" value="1"/>
</dbReference>
<dbReference type="InterPro" id="IPR006839">
    <property type="entry name" value="DarP"/>
</dbReference>
<dbReference type="InterPro" id="IPR023153">
    <property type="entry name" value="DarP_sf"/>
</dbReference>
<dbReference type="NCBIfam" id="NF003593">
    <property type="entry name" value="PRK05255.1-1"/>
    <property type="match status" value="1"/>
</dbReference>
<dbReference type="PANTHER" id="PTHR38101">
    <property type="entry name" value="UPF0307 PROTEIN YJGA"/>
    <property type="match status" value="1"/>
</dbReference>
<dbReference type="PANTHER" id="PTHR38101:SF1">
    <property type="entry name" value="UPF0307 PROTEIN YJGA"/>
    <property type="match status" value="1"/>
</dbReference>
<dbReference type="Pfam" id="PF04751">
    <property type="entry name" value="DarP"/>
    <property type="match status" value="1"/>
</dbReference>
<dbReference type="PIRSF" id="PIRSF016183">
    <property type="entry name" value="UCP016183"/>
    <property type="match status" value="1"/>
</dbReference>
<dbReference type="SUPFAM" id="SSF158710">
    <property type="entry name" value="PSPTO4464-like"/>
    <property type="match status" value="1"/>
</dbReference>
<name>DARP_ECO27</name>
<gene>
    <name evidence="1" type="primary">darP</name>
    <name type="ordered locus">E2348C_4560</name>
</gene>
<keyword id="KW-0963">Cytoplasm</keyword>
<keyword id="KW-1185">Reference proteome</keyword>
<keyword id="KW-0690">Ribosome biogenesis</keyword>
<keyword id="KW-0694">RNA-binding</keyword>
<keyword id="KW-0699">rRNA-binding</keyword>
<protein>
    <recommendedName>
        <fullName evidence="1">Dual-action ribosomal maturation protein DarP</fullName>
    </recommendedName>
    <alternativeName>
        <fullName evidence="1">Large ribosomal subunit assembly factor DarP</fullName>
    </alternativeName>
</protein>
<proteinExistence type="inferred from homology"/>
<evidence type="ECO:0000255" key="1">
    <source>
        <dbReference type="HAMAP-Rule" id="MF_00765"/>
    </source>
</evidence>
<accession>B7UQP4</accession>
<comment type="function">
    <text evidence="1">Member of a network of 50S ribosomal subunit biogenesis factors which assembles along the 30S-50S interface, preventing incorrect 23S rRNA structures from forming. Promotes peptidyl transferase center (PTC) maturation.</text>
</comment>
<comment type="subcellular location">
    <subcellularLocation>
        <location evidence="1">Cytoplasm</location>
    </subcellularLocation>
    <text evidence="1">Associates with late stage pre-50S ribosomal subunits.</text>
</comment>
<comment type="similarity">
    <text evidence="1">Belongs to the DarP family.</text>
</comment>
<feature type="chain" id="PRO_1000148426" description="Dual-action ribosomal maturation protein DarP">
    <location>
        <begin position="1"/>
        <end position="183"/>
    </location>
</feature>
<organism>
    <name type="scientific">Escherichia coli O127:H6 (strain E2348/69 / EPEC)</name>
    <dbReference type="NCBI Taxonomy" id="574521"/>
    <lineage>
        <taxon>Bacteria</taxon>
        <taxon>Pseudomonadati</taxon>
        <taxon>Pseudomonadota</taxon>
        <taxon>Gammaproteobacteria</taxon>
        <taxon>Enterobacterales</taxon>
        <taxon>Enterobacteriaceae</taxon>
        <taxon>Escherichia</taxon>
    </lineage>
</organism>
<reference key="1">
    <citation type="journal article" date="2009" name="J. Bacteriol.">
        <title>Complete genome sequence and comparative genome analysis of enteropathogenic Escherichia coli O127:H6 strain E2348/69.</title>
        <authorList>
            <person name="Iguchi A."/>
            <person name="Thomson N.R."/>
            <person name="Ogura Y."/>
            <person name="Saunders D."/>
            <person name="Ooka T."/>
            <person name="Henderson I.R."/>
            <person name="Harris D."/>
            <person name="Asadulghani M."/>
            <person name="Kurokawa K."/>
            <person name="Dean P."/>
            <person name="Kenny B."/>
            <person name="Quail M.A."/>
            <person name="Thurston S."/>
            <person name="Dougan G."/>
            <person name="Hayashi T."/>
            <person name="Parkhill J."/>
            <person name="Frankel G."/>
        </authorList>
    </citation>
    <scope>NUCLEOTIDE SEQUENCE [LARGE SCALE GENOMIC DNA]</scope>
    <source>
        <strain>E2348/69 / EPEC</strain>
    </source>
</reference>